<accession>Q9HFE4</accession>
<reference key="1">
    <citation type="journal article" date="2002" name="Nature">
        <title>The genome sequence of Schizosaccharomyces pombe.</title>
        <authorList>
            <person name="Wood V."/>
            <person name="Gwilliam R."/>
            <person name="Rajandream M.A."/>
            <person name="Lyne M.H."/>
            <person name="Lyne R."/>
            <person name="Stewart A."/>
            <person name="Sgouros J.G."/>
            <person name="Peat N."/>
            <person name="Hayles J."/>
            <person name="Baker S.G."/>
            <person name="Basham D."/>
            <person name="Bowman S."/>
            <person name="Brooks K."/>
            <person name="Brown D."/>
            <person name="Brown S."/>
            <person name="Chillingworth T."/>
            <person name="Churcher C.M."/>
            <person name="Collins M."/>
            <person name="Connor R."/>
            <person name="Cronin A."/>
            <person name="Davis P."/>
            <person name="Feltwell T."/>
            <person name="Fraser A."/>
            <person name="Gentles S."/>
            <person name="Goble A."/>
            <person name="Hamlin N."/>
            <person name="Harris D.E."/>
            <person name="Hidalgo J."/>
            <person name="Hodgson G."/>
            <person name="Holroyd S."/>
            <person name="Hornsby T."/>
            <person name="Howarth S."/>
            <person name="Huckle E.J."/>
            <person name="Hunt S."/>
            <person name="Jagels K."/>
            <person name="James K.D."/>
            <person name="Jones L."/>
            <person name="Jones M."/>
            <person name="Leather S."/>
            <person name="McDonald S."/>
            <person name="McLean J."/>
            <person name="Mooney P."/>
            <person name="Moule S."/>
            <person name="Mungall K.L."/>
            <person name="Murphy L.D."/>
            <person name="Niblett D."/>
            <person name="Odell C."/>
            <person name="Oliver K."/>
            <person name="O'Neil S."/>
            <person name="Pearson D."/>
            <person name="Quail M.A."/>
            <person name="Rabbinowitsch E."/>
            <person name="Rutherford K.M."/>
            <person name="Rutter S."/>
            <person name="Saunders D."/>
            <person name="Seeger K."/>
            <person name="Sharp S."/>
            <person name="Skelton J."/>
            <person name="Simmonds M.N."/>
            <person name="Squares R."/>
            <person name="Squares S."/>
            <person name="Stevens K."/>
            <person name="Taylor K."/>
            <person name="Taylor R.G."/>
            <person name="Tivey A."/>
            <person name="Walsh S.V."/>
            <person name="Warren T."/>
            <person name="Whitehead S."/>
            <person name="Woodward J.R."/>
            <person name="Volckaert G."/>
            <person name="Aert R."/>
            <person name="Robben J."/>
            <person name="Grymonprez B."/>
            <person name="Weltjens I."/>
            <person name="Vanstreels E."/>
            <person name="Rieger M."/>
            <person name="Schaefer M."/>
            <person name="Mueller-Auer S."/>
            <person name="Gabel C."/>
            <person name="Fuchs M."/>
            <person name="Duesterhoeft A."/>
            <person name="Fritzc C."/>
            <person name="Holzer E."/>
            <person name="Moestl D."/>
            <person name="Hilbert H."/>
            <person name="Borzym K."/>
            <person name="Langer I."/>
            <person name="Beck A."/>
            <person name="Lehrach H."/>
            <person name="Reinhardt R."/>
            <person name="Pohl T.M."/>
            <person name="Eger P."/>
            <person name="Zimmermann W."/>
            <person name="Wedler H."/>
            <person name="Wambutt R."/>
            <person name="Purnelle B."/>
            <person name="Goffeau A."/>
            <person name="Cadieu E."/>
            <person name="Dreano S."/>
            <person name="Gloux S."/>
            <person name="Lelaure V."/>
            <person name="Mottier S."/>
            <person name="Galibert F."/>
            <person name="Aves S.J."/>
            <person name="Xiang Z."/>
            <person name="Hunt C."/>
            <person name="Moore K."/>
            <person name="Hurst S.M."/>
            <person name="Lucas M."/>
            <person name="Rochet M."/>
            <person name="Gaillardin C."/>
            <person name="Tallada V.A."/>
            <person name="Garzon A."/>
            <person name="Thode G."/>
            <person name="Daga R.R."/>
            <person name="Cruzado L."/>
            <person name="Jimenez J."/>
            <person name="Sanchez M."/>
            <person name="del Rey F."/>
            <person name="Benito J."/>
            <person name="Dominguez A."/>
            <person name="Revuelta J.L."/>
            <person name="Moreno S."/>
            <person name="Armstrong J."/>
            <person name="Forsburg S.L."/>
            <person name="Cerutti L."/>
            <person name="Lowe T."/>
            <person name="McCombie W.R."/>
            <person name="Paulsen I."/>
            <person name="Potashkin J."/>
            <person name="Shpakovski G.V."/>
            <person name="Ussery D."/>
            <person name="Barrell B.G."/>
            <person name="Nurse P."/>
        </authorList>
    </citation>
    <scope>NUCLEOTIDE SEQUENCE [LARGE SCALE GENOMIC DNA]</scope>
    <source>
        <strain>972 / ATCC 24843</strain>
    </source>
</reference>
<reference key="2">
    <citation type="journal article" date="2006" name="Proc. Natl. Acad. Sci. U.S.A.">
        <title>Mechanism of action of a flavin-containing monooxygenase.</title>
        <authorList>
            <person name="Eswaramoorthy S."/>
            <person name="Bonanno J.B."/>
            <person name="Burley S.K."/>
            <person name="Swaminathan S."/>
        </authorList>
    </citation>
    <scope>X-RAY CRYSTALLOGRAPHY (2.1 ANGSTROMS) OF 1-447 IN COMPLEX WITH FAD; NADPH AND METHIMAZOLE</scope>
</reference>
<feature type="chain" id="PRO_0000314653" description="Thiol-specific monooxygenase">
    <location>
        <begin position="1"/>
        <end position="447"/>
    </location>
</feature>
<feature type="binding site" evidence="2 4 5 6">
    <location>
        <begin position="13"/>
        <end position="17"/>
    </location>
    <ligand>
        <name>FAD</name>
        <dbReference type="ChEBI" id="CHEBI:57692"/>
    </ligand>
</feature>
<feature type="binding site" evidence="2 4 5 6">
    <location>
        <position position="38"/>
    </location>
    <ligand>
        <name>FAD</name>
        <dbReference type="ChEBI" id="CHEBI:57692"/>
    </ligand>
</feature>
<feature type="binding site" evidence="2 4 5 6">
    <location>
        <begin position="46"/>
        <end position="47"/>
    </location>
    <ligand>
        <name>FAD</name>
        <dbReference type="ChEBI" id="CHEBI:57692"/>
    </ligand>
</feature>
<feature type="binding site" evidence="2 5">
    <location>
        <begin position="90"/>
        <end position="91"/>
    </location>
    <ligand>
        <name>NADP(+)</name>
        <dbReference type="ChEBI" id="CHEBI:58349"/>
    </ligand>
</feature>
<feature type="binding site" evidence="2 4 5 6">
    <location>
        <begin position="91"/>
        <end position="92"/>
    </location>
    <ligand>
        <name>FAD</name>
        <dbReference type="ChEBI" id="CHEBI:57692"/>
    </ligand>
</feature>
<feature type="binding site" evidence="2 4 5 6">
    <location>
        <begin position="137"/>
        <end position="138"/>
    </location>
    <ligand>
        <name>FAD</name>
        <dbReference type="ChEBI" id="CHEBI:57692"/>
    </ligand>
</feature>
<feature type="binding site" evidence="2 5">
    <location>
        <begin position="223"/>
        <end position="226"/>
    </location>
    <ligand>
        <name>NADP(+)</name>
        <dbReference type="ChEBI" id="CHEBI:58349"/>
    </ligand>
</feature>
<feature type="strand" evidence="8">
    <location>
        <begin position="8"/>
        <end position="12"/>
    </location>
</feature>
<feature type="helix" evidence="8">
    <location>
        <begin position="16"/>
        <end position="26"/>
    </location>
</feature>
<feature type="turn" evidence="8">
    <location>
        <begin position="27"/>
        <end position="29"/>
    </location>
</feature>
<feature type="strand" evidence="8">
    <location>
        <begin position="32"/>
        <end position="37"/>
    </location>
</feature>
<feature type="strand" evidence="8">
    <location>
        <begin position="39"/>
        <end position="44"/>
    </location>
</feature>
<feature type="helix" evidence="9">
    <location>
        <begin position="45"/>
        <end position="47"/>
    </location>
</feature>
<feature type="strand" evidence="8">
    <location>
        <begin position="59"/>
        <end position="61"/>
    </location>
</feature>
<feature type="strand" evidence="9">
    <location>
        <begin position="71"/>
        <end position="73"/>
    </location>
</feature>
<feature type="strand" evidence="8">
    <location>
        <begin position="74"/>
        <end position="76"/>
    </location>
</feature>
<feature type="helix" evidence="8">
    <location>
        <begin position="94"/>
        <end position="97"/>
    </location>
</feature>
<feature type="helix" evidence="8">
    <location>
        <begin position="114"/>
        <end position="125"/>
    </location>
</feature>
<feature type="helix" evidence="8">
    <location>
        <begin position="126"/>
        <end position="131"/>
    </location>
</feature>
<feature type="strand" evidence="8">
    <location>
        <begin position="135"/>
        <end position="144"/>
    </location>
</feature>
<feature type="strand" evidence="8">
    <location>
        <begin position="147"/>
        <end position="156"/>
    </location>
</feature>
<feature type="strand" evidence="8">
    <location>
        <begin position="161"/>
        <end position="171"/>
    </location>
</feature>
<feature type="strand" evidence="8">
    <location>
        <begin position="175"/>
        <end position="179"/>
    </location>
</feature>
<feature type="helix" evidence="8">
    <location>
        <begin position="187"/>
        <end position="193"/>
    </location>
</feature>
<feature type="strand" evidence="8">
    <location>
        <begin position="197"/>
        <end position="200"/>
    </location>
</feature>
<feature type="helix" evidence="8">
    <location>
        <begin position="201"/>
        <end position="203"/>
    </location>
</feature>
<feature type="helix" evidence="8">
    <location>
        <begin position="207"/>
        <end position="210"/>
    </location>
</feature>
<feature type="strand" evidence="8">
    <location>
        <begin position="215"/>
        <end position="218"/>
    </location>
</feature>
<feature type="helix" evidence="8">
    <location>
        <begin position="222"/>
        <end position="231"/>
    </location>
</feature>
<feature type="turn" evidence="8">
    <location>
        <begin position="232"/>
        <end position="234"/>
    </location>
</feature>
<feature type="strand" evidence="8">
    <location>
        <begin position="237"/>
        <end position="242"/>
    </location>
</feature>
<feature type="strand" evidence="8">
    <location>
        <begin position="252"/>
        <end position="257"/>
    </location>
</feature>
<feature type="strand" evidence="8">
    <location>
        <begin position="260"/>
        <end position="264"/>
    </location>
</feature>
<feature type="turn" evidence="8">
    <location>
        <begin position="265"/>
        <end position="268"/>
    </location>
</feature>
<feature type="strand" evidence="8">
    <location>
        <begin position="269"/>
        <end position="272"/>
    </location>
</feature>
<feature type="turn" evidence="8">
    <location>
        <begin position="273"/>
        <end position="275"/>
    </location>
</feature>
<feature type="strand" evidence="8">
    <location>
        <begin position="276"/>
        <end position="278"/>
    </location>
</feature>
<feature type="strand" evidence="8">
    <location>
        <begin position="282"/>
        <end position="286"/>
    </location>
</feature>
<feature type="helix" evidence="8">
    <location>
        <begin position="297"/>
        <end position="300"/>
    </location>
</feature>
<feature type="turn" evidence="8">
    <location>
        <begin position="305"/>
        <end position="307"/>
    </location>
</feature>
<feature type="strand" evidence="8">
    <location>
        <begin position="311"/>
        <end position="315"/>
    </location>
</feature>
<feature type="strand" evidence="8">
    <location>
        <begin position="318"/>
        <end position="320"/>
    </location>
</feature>
<feature type="turn" evidence="8">
    <location>
        <begin position="321"/>
        <end position="323"/>
    </location>
</feature>
<feature type="strand" evidence="8">
    <location>
        <begin position="331"/>
        <end position="335"/>
    </location>
</feature>
<feature type="strand" evidence="8">
    <location>
        <begin position="338"/>
        <end position="340"/>
    </location>
</feature>
<feature type="helix" evidence="8">
    <location>
        <begin position="342"/>
        <end position="357"/>
    </location>
</feature>
<feature type="helix" evidence="8">
    <location>
        <begin position="366"/>
        <end position="380"/>
    </location>
</feature>
<feature type="helix" evidence="8">
    <location>
        <begin position="384"/>
        <end position="386"/>
    </location>
</feature>
<feature type="strand" evidence="7">
    <location>
        <begin position="387"/>
        <end position="389"/>
    </location>
</feature>
<feature type="turn" evidence="8">
    <location>
        <begin position="391"/>
        <end position="393"/>
    </location>
</feature>
<feature type="helix" evidence="8">
    <location>
        <begin position="394"/>
        <end position="407"/>
    </location>
</feature>
<feature type="helix" evidence="8">
    <location>
        <begin position="424"/>
        <end position="431"/>
    </location>
</feature>
<feature type="helix" evidence="8">
    <location>
        <begin position="433"/>
        <end position="440"/>
    </location>
</feature>
<comment type="function">
    <text evidence="1">Flavin-dependent oxidation of thiol-containing compounds. Probably required for the correct folding of disulfide-bonded proteins (By similarity).</text>
</comment>
<comment type="cofactor">
    <cofactor>
        <name>FAD</name>
        <dbReference type="ChEBI" id="CHEBI:57692"/>
    </cofactor>
</comment>
<comment type="subunit">
    <text evidence="1">Monomer.</text>
</comment>
<comment type="similarity">
    <text evidence="3">Belongs to the FMO family.</text>
</comment>
<keyword id="KW-0002">3D-structure</keyword>
<keyword id="KW-0274">FAD</keyword>
<keyword id="KW-0285">Flavoprotein</keyword>
<keyword id="KW-0503">Monooxygenase</keyword>
<keyword id="KW-0521">NADP</keyword>
<keyword id="KW-0560">Oxidoreductase</keyword>
<keyword id="KW-1185">Reference proteome</keyword>
<evidence type="ECO:0000250" key="1"/>
<evidence type="ECO:0000269" key="2">
    <source>
    </source>
</evidence>
<evidence type="ECO:0000305" key="3"/>
<evidence type="ECO:0007744" key="4">
    <source>
        <dbReference type="PDB" id="1VQW"/>
    </source>
</evidence>
<evidence type="ECO:0007744" key="5">
    <source>
        <dbReference type="PDB" id="2GV8"/>
    </source>
</evidence>
<evidence type="ECO:0007744" key="6">
    <source>
        <dbReference type="PDB" id="2GVC"/>
    </source>
</evidence>
<evidence type="ECO:0007829" key="7">
    <source>
        <dbReference type="PDB" id="1VQW"/>
    </source>
</evidence>
<evidence type="ECO:0007829" key="8">
    <source>
        <dbReference type="PDB" id="2GV8"/>
    </source>
</evidence>
<evidence type="ECO:0007829" key="9">
    <source>
        <dbReference type="PDB" id="2GVC"/>
    </source>
</evidence>
<organism>
    <name type="scientific">Schizosaccharomyces pombe (strain 972 / ATCC 24843)</name>
    <name type="common">Fission yeast</name>
    <dbReference type="NCBI Taxonomy" id="284812"/>
    <lineage>
        <taxon>Eukaryota</taxon>
        <taxon>Fungi</taxon>
        <taxon>Dikarya</taxon>
        <taxon>Ascomycota</taxon>
        <taxon>Taphrinomycotina</taxon>
        <taxon>Schizosaccharomycetes</taxon>
        <taxon>Schizosaccharomycetales</taxon>
        <taxon>Schizosaccharomycetaceae</taxon>
        <taxon>Schizosaccharomyces</taxon>
    </lineage>
</organism>
<dbReference type="EC" id="1.14.13.-"/>
<dbReference type="EMBL" id="CU329671">
    <property type="protein sequence ID" value="CAC08547.1"/>
    <property type="molecule type" value="Genomic_DNA"/>
</dbReference>
<dbReference type="RefSeq" id="NP_595782.1">
    <property type="nucleotide sequence ID" value="NM_001021682.2"/>
</dbReference>
<dbReference type="PDB" id="1VQW">
    <property type="method" value="X-ray"/>
    <property type="resolution" value="2.40 A"/>
    <property type="chains" value="A/B=2-447"/>
</dbReference>
<dbReference type="PDB" id="2GV8">
    <property type="method" value="X-ray"/>
    <property type="resolution" value="2.10 A"/>
    <property type="chains" value="A/B=1-447"/>
</dbReference>
<dbReference type="PDB" id="2GVC">
    <property type="method" value="X-ray"/>
    <property type="resolution" value="2.22 A"/>
    <property type="chains" value="A/B/D/E=1-447"/>
</dbReference>
<dbReference type="PDBsum" id="1VQW"/>
<dbReference type="PDBsum" id="2GV8"/>
<dbReference type="PDBsum" id="2GVC"/>
<dbReference type="SMR" id="Q9HFE4"/>
<dbReference type="BioGRID" id="277742">
    <property type="interactions" value="8"/>
</dbReference>
<dbReference type="FunCoup" id="Q9HFE4">
    <property type="interactions" value="27"/>
</dbReference>
<dbReference type="STRING" id="284812.Q9HFE4"/>
<dbReference type="iPTMnet" id="Q9HFE4"/>
<dbReference type="PaxDb" id="4896-SPBP16F5.08c.1"/>
<dbReference type="DNASU" id="2541228"/>
<dbReference type="EnsemblFungi" id="SPBP16F5.08c.1">
    <property type="protein sequence ID" value="SPBP16F5.08c.1:pep"/>
    <property type="gene ID" value="SPBP16F5.08c"/>
</dbReference>
<dbReference type="GeneID" id="2541228"/>
<dbReference type="KEGG" id="spo:2541228"/>
<dbReference type="PomBase" id="SPBP16F5.08c">
    <property type="gene designation" value="fmo1"/>
</dbReference>
<dbReference type="VEuPathDB" id="FungiDB:SPBP16F5.08c"/>
<dbReference type="eggNOG" id="KOG1399">
    <property type="taxonomic scope" value="Eukaryota"/>
</dbReference>
<dbReference type="HOGENOM" id="CLU_006909_5_0_1"/>
<dbReference type="InParanoid" id="Q9HFE4"/>
<dbReference type="OMA" id="MVTPLWK"/>
<dbReference type="PhylomeDB" id="Q9HFE4"/>
<dbReference type="BRENDA" id="1.14.13.8">
    <property type="organism ID" value="5613"/>
</dbReference>
<dbReference type="EvolutionaryTrace" id="Q9HFE4"/>
<dbReference type="PRO" id="PR:Q9HFE4"/>
<dbReference type="Proteomes" id="UP000002485">
    <property type="component" value="Chromosome II"/>
</dbReference>
<dbReference type="GO" id="GO:0005789">
    <property type="term" value="C:endoplasmic reticulum membrane"/>
    <property type="evidence" value="ECO:0000266"/>
    <property type="project" value="PomBase"/>
</dbReference>
<dbReference type="GO" id="GO:0071949">
    <property type="term" value="F:FAD binding"/>
    <property type="evidence" value="ECO:0000314"/>
    <property type="project" value="PomBase"/>
</dbReference>
<dbReference type="GO" id="GO:0004499">
    <property type="term" value="F:N,N-dimethylaniline monooxygenase activity"/>
    <property type="evidence" value="ECO:0000314"/>
    <property type="project" value="PomBase"/>
</dbReference>
<dbReference type="GO" id="GO:0050661">
    <property type="term" value="F:NADP binding"/>
    <property type="evidence" value="ECO:0007669"/>
    <property type="project" value="InterPro"/>
</dbReference>
<dbReference type="GO" id="GO:1990748">
    <property type="term" value="P:cellular detoxification"/>
    <property type="evidence" value="ECO:0000269"/>
    <property type="project" value="PomBase"/>
</dbReference>
<dbReference type="FunFam" id="3.50.50.60:FF:000138">
    <property type="entry name" value="Flavin-containing monooxygenase"/>
    <property type="match status" value="1"/>
</dbReference>
<dbReference type="Gene3D" id="3.50.50.60">
    <property type="entry name" value="FAD/NAD(P)-binding domain"/>
    <property type="match status" value="2"/>
</dbReference>
<dbReference type="InterPro" id="IPR036188">
    <property type="entry name" value="FAD/NAD-bd_sf"/>
</dbReference>
<dbReference type="InterPro" id="IPR000960">
    <property type="entry name" value="Flavin_mOase"/>
</dbReference>
<dbReference type="InterPro" id="IPR020946">
    <property type="entry name" value="Flavin_mOase-like"/>
</dbReference>
<dbReference type="InterPro" id="IPR050346">
    <property type="entry name" value="FMO-like"/>
</dbReference>
<dbReference type="PANTHER" id="PTHR23023">
    <property type="entry name" value="DIMETHYLANILINE MONOOXYGENASE"/>
    <property type="match status" value="1"/>
</dbReference>
<dbReference type="Pfam" id="PF00743">
    <property type="entry name" value="FMO-like"/>
    <property type="match status" value="2"/>
</dbReference>
<dbReference type="Pfam" id="PF13450">
    <property type="entry name" value="NAD_binding_8"/>
    <property type="match status" value="1"/>
</dbReference>
<dbReference type="PIRSF" id="PIRSF000332">
    <property type="entry name" value="FMO"/>
    <property type="match status" value="1"/>
</dbReference>
<dbReference type="PRINTS" id="PR00370">
    <property type="entry name" value="FMOXYGENASE"/>
</dbReference>
<dbReference type="SUPFAM" id="SSF51905">
    <property type="entry name" value="FAD/NAD(P)-binding domain"/>
    <property type="match status" value="2"/>
</dbReference>
<name>FMO1_SCHPO</name>
<sequence>MCLPTIRKIAIIGAGPSGLVTAKALLAEKAFDQVTLFERRGSPGGVWNYTSTLSNKLPVPSTNPILTTEPIVGPAALPVYPSPLYRDLQTNTPIELMGYCDQSFKPQTLQFPHRHTIQEYQRIYAQPLLPFIKLATDVLDIEKKDGSWVVTYKGTKAGSPISKDIFDAVSICNGHYEVPYIPNIKGLDEYAKAVPGSVLHSSLFREPELFVGESVLVVGGASSANDLVRHLTPVAKHPIYQSLLGGGDIQNESLQQVPEITKFDPTTREIYLKGGKVLSNIDRVIYCTGYLYSVPFPSLAKLKSPETKLIDDGSHVHNVYQHIFYIPDPTLAFVGLALHVVPFPTSQAQAAFLARVWSGRLKLPSKEEQLKWQDELMFSLSGANNMYHSLDYPKDATYINKLHDWCKQATPVLEEEFPSPYWGEKERSIRENMWSIRAKFFGIEPPK</sequence>
<protein>
    <recommendedName>
        <fullName>Thiol-specific monooxygenase</fullName>
        <ecNumber>1.14.13.-</ecNumber>
    </recommendedName>
    <alternativeName>
        <fullName>Flavin-dependent monooxygenase</fullName>
    </alternativeName>
</protein>
<proteinExistence type="evidence at protein level"/>
<gene>
    <name type="primary">fmo1</name>
    <name type="ORF">SPBP16F5.08c</name>
</gene>